<dbReference type="EC" id="6.2.1.1" evidence="1"/>
<dbReference type="EMBL" id="BA000031">
    <property type="protein sequence ID" value="BAC61141.1"/>
    <property type="molecule type" value="Genomic_DNA"/>
</dbReference>
<dbReference type="RefSeq" id="NP_799257.1">
    <property type="nucleotide sequence ID" value="NC_004603.1"/>
</dbReference>
<dbReference type="SMR" id="Q87KU7"/>
<dbReference type="GeneID" id="1190441"/>
<dbReference type="KEGG" id="vpa:VP2878"/>
<dbReference type="PATRIC" id="fig|223926.6.peg.2769"/>
<dbReference type="eggNOG" id="COG0365">
    <property type="taxonomic scope" value="Bacteria"/>
</dbReference>
<dbReference type="HOGENOM" id="CLU_000022_3_6_6"/>
<dbReference type="Proteomes" id="UP000002493">
    <property type="component" value="Chromosome 1"/>
</dbReference>
<dbReference type="GO" id="GO:0005829">
    <property type="term" value="C:cytosol"/>
    <property type="evidence" value="ECO:0007669"/>
    <property type="project" value="TreeGrafter"/>
</dbReference>
<dbReference type="GO" id="GO:0003987">
    <property type="term" value="F:acetate-CoA ligase activity"/>
    <property type="evidence" value="ECO:0007669"/>
    <property type="project" value="UniProtKB-UniRule"/>
</dbReference>
<dbReference type="GO" id="GO:0016208">
    <property type="term" value="F:AMP binding"/>
    <property type="evidence" value="ECO:0007669"/>
    <property type="project" value="InterPro"/>
</dbReference>
<dbReference type="GO" id="GO:0005524">
    <property type="term" value="F:ATP binding"/>
    <property type="evidence" value="ECO:0007669"/>
    <property type="project" value="UniProtKB-KW"/>
</dbReference>
<dbReference type="GO" id="GO:0046872">
    <property type="term" value="F:metal ion binding"/>
    <property type="evidence" value="ECO:0007669"/>
    <property type="project" value="UniProtKB-KW"/>
</dbReference>
<dbReference type="GO" id="GO:0019427">
    <property type="term" value="P:acetyl-CoA biosynthetic process from acetate"/>
    <property type="evidence" value="ECO:0007669"/>
    <property type="project" value="InterPro"/>
</dbReference>
<dbReference type="CDD" id="cd05966">
    <property type="entry name" value="ACS"/>
    <property type="match status" value="1"/>
</dbReference>
<dbReference type="FunFam" id="3.30.300.30:FF:000004">
    <property type="entry name" value="Acetyl-coenzyme A synthetase"/>
    <property type="match status" value="1"/>
</dbReference>
<dbReference type="FunFam" id="3.40.50.12780:FF:000001">
    <property type="entry name" value="Acetyl-coenzyme A synthetase"/>
    <property type="match status" value="1"/>
</dbReference>
<dbReference type="Gene3D" id="3.30.300.30">
    <property type="match status" value="1"/>
</dbReference>
<dbReference type="Gene3D" id="3.40.50.12780">
    <property type="entry name" value="N-terminal domain of ligase-like"/>
    <property type="match status" value="1"/>
</dbReference>
<dbReference type="HAMAP" id="MF_01123">
    <property type="entry name" value="Ac_CoA_synth"/>
    <property type="match status" value="1"/>
</dbReference>
<dbReference type="InterPro" id="IPR011904">
    <property type="entry name" value="Ac_CoA_lig"/>
</dbReference>
<dbReference type="InterPro" id="IPR032387">
    <property type="entry name" value="ACAS_N"/>
</dbReference>
<dbReference type="InterPro" id="IPR025110">
    <property type="entry name" value="AMP-bd_C"/>
</dbReference>
<dbReference type="InterPro" id="IPR045851">
    <property type="entry name" value="AMP-bd_C_sf"/>
</dbReference>
<dbReference type="InterPro" id="IPR020845">
    <property type="entry name" value="AMP-binding_CS"/>
</dbReference>
<dbReference type="InterPro" id="IPR000873">
    <property type="entry name" value="AMP-dep_synth/lig_dom"/>
</dbReference>
<dbReference type="InterPro" id="IPR042099">
    <property type="entry name" value="ANL_N_sf"/>
</dbReference>
<dbReference type="NCBIfam" id="TIGR02188">
    <property type="entry name" value="Ac_CoA_lig_AcsA"/>
    <property type="match status" value="1"/>
</dbReference>
<dbReference type="NCBIfam" id="NF001208">
    <property type="entry name" value="PRK00174.1"/>
    <property type="match status" value="1"/>
</dbReference>
<dbReference type="PANTHER" id="PTHR24095">
    <property type="entry name" value="ACETYL-COENZYME A SYNTHETASE"/>
    <property type="match status" value="1"/>
</dbReference>
<dbReference type="PANTHER" id="PTHR24095:SF243">
    <property type="entry name" value="ACETYL-COENZYME A SYNTHETASE"/>
    <property type="match status" value="1"/>
</dbReference>
<dbReference type="Pfam" id="PF16177">
    <property type="entry name" value="ACAS_N"/>
    <property type="match status" value="1"/>
</dbReference>
<dbReference type="Pfam" id="PF00501">
    <property type="entry name" value="AMP-binding"/>
    <property type="match status" value="1"/>
</dbReference>
<dbReference type="Pfam" id="PF13193">
    <property type="entry name" value="AMP-binding_C"/>
    <property type="match status" value="1"/>
</dbReference>
<dbReference type="SUPFAM" id="SSF56801">
    <property type="entry name" value="Acetyl-CoA synthetase-like"/>
    <property type="match status" value="1"/>
</dbReference>
<dbReference type="PROSITE" id="PS00455">
    <property type="entry name" value="AMP_BINDING"/>
    <property type="match status" value="1"/>
</dbReference>
<evidence type="ECO:0000255" key="1">
    <source>
        <dbReference type="HAMAP-Rule" id="MF_01123"/>
    </source>
</evidence>
<proteinExistence type="inferred from homology"/>
<reference key="1">
    <citation type="journal article" date="2003" name="Lancet">
        <title>Genome sequence of Vibrio parahaemolyticus: a pathogenic mechanism distinct from that of V. cholerae.</title>
        <authorList>
            <person name="Makino K."/>
            <person name="Oshima K."/>
            <person name="Kurokawa K."/>
            <person name="Yokoyama K."/>
            <person name="Uda T."/>
            <person name="Tagomori K."/>
            <person name="Iijima Y."/>
            <person name="Najima M."/>
            <person name="Nakano M."/>
            <person name="Yamashita A."/>
            <person name="Kubota Y."/>
            <person name="Kimura S."/>
            <person name="Yasunaga T."/>
            <person name="Honda T."/>
            <person name="Shinagawa H."/>
            <person name="Hattori M."/>
            <person name="Iida T."/>
        </authorList>
    </citation>
    <scope>NUCLEOTIDE SEQUENCE [LARGE SCALE GENOMIC DNA]</scope>
    <source>
        <strain>RIMD 2210633</strain>
    </source>
</reference>
<gene>
    <name evidence="1" type="primary">acsA</name>
    <name type="ordered locus">VP2878</name>
</gene>
<feature type="chain" id="PRO_0000208393" description="Acetyl-coenzyme A synthetase">
    <location>
        <begin position="1"/>
        <end position="650"/>
    </location>
</feature>
<feature type="binding site" evidence="1">
    <location>
        <begin position="191"/>
        <end position="194"/>
    </location>
    <ligand>
        <name>CoA</name>
        <dbReference type="ChEBI" id="CHEBI:57287"/>
    </ligand>
</feature>
<feature type="binding site" evidence="1">
    <location>
        <position position="311"/>
    </location>
    <ligand>
        <name>CoA</name>
        <dbReference type="ChEBI" id="CHEBI:57287"/>
    </ligand>
</feature>
<feature type="binding site" evidence="1">
    <location>
        <position position="335"/>
    </location>
    <ligand>
        <name>CoA</name>
        <dbReference type="ChEBI" id="CHEBI:57287"/>
    </ligand>
</feature>
<feature type="binding site" evidence="1">
    <location>
        <begin position="387"/>
        <end position="389"/>
    </location>
    <ligand>
        <name>ATP</name>
        <dbReference type="ChEBI" id="CHEBI:30616"/>
    </ligand>
</feature>
<feature type="binding site" evidence="1">
    <location>
        <begin position="411"/>
        <end position="416"/>
    </location>
    <ligand>
        <name>ATP</name>
        <dbReference type="ChEBI" id="CHEBI:30616"/>
    </ligand>
</feature>
<feature type="binding site" evidence="1">
    <location>
        <position position="501"/>
    </location>
    <ligand>
        <name>ATP</name>
        <dbReference type="ChEBI" id="CHEBI:30616"/>
    </ligand>
</feature>
<feature type="binding site" evidence="1">
    <location>
        <position position="516"/>
    </location>
    <ligand>
        <name>ATP</name>
        <dbReference type="ChEBI" id="CHEBI:30616"/>
    </ligand>
</feature>
<feature type="binding site" evidence="1">
    <location>
        <position position="524"/>
    </location>
    <ligand>
        <name>CoA</name>
        <dbReference type="ChEBI" id="CHEBI:57287"/>
    </ligand>
</feature>
<feature type="binding site" evidence="1">
    <location>
        <position position="527"/>
    </location>
    <ligand>
        <name>ATP</name>
        <dbReference type="ChEBI" id="CHEBI:30616"/>
    </ligand>
</feature>
<feature type="binding site" evidence="1">
    <location>
        <position position="538"/>
    </location>
    <ligand>
        <name>Mg(2+)</name>
        <dbReference type="ChEBI" id="CHEBI:18420"/>
    </ligand>
</feature>
<feature type="binding site" evidence="1">
    <location>
        <position position="540"/>
    </location>
    <ligand>
        <name>Mg(2+)</name>
        <dbReference type="ChEBI" id="CHEBI:18420"/>
    </ligand>
</feature>
<feature type="binding site" evidence="1">
    <location>
        <position position="543"/>
    </location>
    <ligand>
        <name>Mg(2+)</name>
        <dbReference type="ChEBI" id="CHEBI:18420"/>
    </ligand>
</feature>
<feature type="binding site" evidence="1">
    <location>
        <position position="585"/>
    </location>
    <ligand>
        <name>CoA</name>
        <dbReference type="ChEBI" id="CHEBI:57287"/>
    </ligand>
</feature>
<feature type="modified residue" description="N6-acetyllysine" evidence="1">
    <location>
        <position position="610"/>
    </location>
</feature>
<comment type="function">
    <text evidence="1">Catalyzes the conversion of acetate into acetyl-CoA (AcCoA), an essential intermediate at the junction of anabolic and catabolic pathways. AcsA undergoes a two-step reaction. In the first half reaction, AcsA combines acetate with ATP to form acetyl-adenylate (AcAMP) intermediate. In the second half reaction, it can then transfer the acetyl group from AcAMP to the sulfhydryl group of CoA, forming the product AcCoA.</text>
</comment>
<comment type="catalytic activity">
    <reaction evidence="1">
        <text>acetate + ATP + CoA = acetyl-CoA + AMP + diphosphate</text>
        <dbReference type="Rhea" id="RHEA:23176"/>
        <dbReference type="ChEBI" id="CHEBI:30089"/>
        <dbReference type="ChEBI" id="CHEBI:30616"/>
        <dbReference type="ChEBI" id="CHEBI:33019"/>
        <dbReference type="ChEBI" id="CHEBI:57287"/>
        <dbReference type="ChEBI" id="CHEBI:57288"/>
        <dbReference type="ChEBI" id="CHEBI:456215"/>
        <dbReference type="EC" id="6.2.1.1"/>
    </reaction>
</comment>
<comment type="cofactor">
    <cofactor evidence="1">
        <name>Mg(2+)</name>
        <dbReference type="ChEBI" id="CHEBI:18420"/>
    </cofactor>
</comment>
<comment type="PTM">
    <text evidence="1">Acetylated. Deacetylation by the SIR2-homolog deacetylase activates the enzyme.</text>
</comment>
<comment type="similarity">
    <text evidence="1">Belongs to the ATP-dependent AMP-binding enzyme family.</text>
</comment>
<sequence length="650" mass="71747">MSEAHVYPVKENIKTHTHADNDTYLAMYQQSVTDPEGFWNEHGKIVDWIKPFTKVKSTSFDTGHVDIRWFEDGTLNVSANCIDRHLAEHGDDVAIIWEGDDPADDKTLTFNELHKEVCKFSNALKDQGVRKGDVVCLYMPMVPEAAIAMLACTRIGAVHTVVFGGFSPEALSGRIIDSDAKVVITADEGVRGGRAVPLKKNVDEALTNPEVKTISKVVVLKRTGGNVDWHGHRDVWWHEATAKVSDVCPPEEMKAEDPLFILYTSGSTGKPKGVLHTTGGYLVYAAMTFKYVFDYQPGETFWCTADVGWITGHTYLIYGPLANGAKTILFEGVPNYPNTSRMSEVVDKHQVNILYTAPTAIRALMAKGNEAVAGTSRSSLRIMGSVGEPINPEAWEWYYKTIGNENSPIVDTWWQTETGGILIAPLPGATDLKPGSATRPFFGVQPALVDNMGNILEDTVAEGNLVILDSWPGQMRTVYGDHERFEQTYFSTFKGMYFTSDGARRDEDGYYWITGRVDDVLNVSGHRMGTAEIESALVAHHKIAEAAIVGIPHDIKGQAIYAYITLNDGEFPSAELHKEVKDWVRKEIGPIATPDVLHWTDSLPKTRSGKIMRRILRKIATGDTSNLGDTSTLADPSVVDKLIAEKAELV</sequence>
<accession>Q87KU7</accession>
<organism>
    <name type="scientific">Vibrio parahaemolyticus serotype O3:K6 (strain RIMD 2210633)</name>
    <dbReference type="NCBI Taxonomy" id="223926"/>
    <lineage>
        <taxon>Bacteria</taxon>
        <taxon>Pseudomonadati</taxon>
        <taxon>Pseudomonadota</taxon>
        <taxon>Gammaproteobacteria</taxon>
        <taxon>Vibrionales</taxon>
        <taxon>Vibrionaceae</taxon>
        <taxon>Vibrio</taxon>
    </lineage>
</organism>
<keyword id="KW-0007">Acetylation</keyword>
<keyword id="KW-0067">ATP-binding</keyword>
<keyword id="KW-0436">Ligase</keyword>
<keyword id="KW-0460">Magnesium</keyword>
<keyword id="KW-0479">Metal-binding</keyword>
<keyword id="KW-0547">Nucleotide-binding</keyword>
<protein>
    <recommendedName>
        <fullName evidence="1">Acetyl-coenzyme A synthetase</fullName>
        <shortName evidence="1">AcCoA synthetase</shortName>
        <shortName evidence="1">Acs</shortName>
        <ecNumber evidence="1">6.2.1.1</ecNumber>
    </recommendedName>
    <alternativeName>
        <fullName evidence="1">Acetate--CoA ligase</fullName>
    </alternativeName>
    <alternativeName>
        <fullName evidence="1">Acyl-activating enzyme</fullName>
    </alternativeName>
</protein>
<name>ACSA_VIBPA</name>